<evidence type="ECO:0000255" key="1">
    <source>
        <dbReference type="HAMAP-Rule" id="MF_00067"/>
    </source>
</evidence>
<protein>
    <recommendedName>
        <fullName evidence="1">Phosphoheptose isomerase</fullName>
        <ecNumber evidence="1">5.3.1.28</ecNumber>
    </recommendedName>
    <alternativeName>
        <fullName evidence="1">Sedoheptulose 7-phosphate isomerase</fullName>
    </alternativeName>
</protein>
<comment type="function">
    <text evidence="1">Catalyzes the isomerization of sedoheptulose 7-phosphate in D-glycero-D-manno-heptose 7-phosphate.</text>
</comment>
<comment type="catalytic activity">
    <reaction evidence="1">
        <text>2 D-sedoheptulose 7-phosphate = D-glycero-alpha-D-manno-heptose 7-phosphate + D-glycero-beta-D-manno-heptose 7-phosphate</text>
        <dbReference type="Rhea" id="RHEA:27489"/>
        <dbReference type="ChEBI" id="CHEBI:57483"/>
        <dbReference type="ChEBI" id="CHEBI:60203"/>
        <dbReference type="ChEBI" id="CHEBI:60204"/>
        <dbReference type="EC" id="5.3.1.28"/>
    </reaction>
</comment>
<comment type="cofactor">
    <cofactor evidence="1">
        <name>Zn(2+)</name>
        <dbReference type="ChEBI" id="CHEBI:29105"/>
    </cofactor>
    <text evidence="1">Binds 1 zinc ion per subunit.</text>
</comment>
<comment type="pathway">
    <text evidence="1">Carbohydrate biosynthesis; D-glycero-D-manno-heptose 7-phosphate biosynthesis; D-glycero-alpha-D-manno-heptose 7-phosphate and D-glycero-beta-D-manno-heptose 7-phosphate from sedoheptulose 7-phosphate: step 1/1.</text>
</comment>
<comment type="subunit">
    <text evidence="1">Homotetramer.</text>
</comment>
<comment type="subcellular location">
    <subcellularLocation>
        <location evidence="1">Cytoplasm</location>
    </subcellularLocation>
</comment>
<comment type="miscellaneous">
    <text evidence="1">The reaction produces a racemic mixture of D-glycero-alpha-D-manno-heptose 7-phosphate and D-glycero-beta-D-manno-heptose 7-phosphate.</text>
</comment>
<comment type="similarity">
    <text evidence="1">Belongs to the SIS family. GmhA subfamily.</text>
</comment>
<accession>Q2NVF5</accession>
<proteinExistence type="inferred from homology"/>
<feature type="chain" id="PRO_1000009099" description="Phosphoheptose isomerase">
    <location>
        <begin position="1"/>
        <end position="194"/>
    </location>
</feature>
<feature type="domain" description="SIS" evidence="1">
    <location>
        <begin position="37"/>
        <end position="194"/>
    </location>
</feature>
<feature type="binding site" evidence="1">
    <location>
        <begin position="52"/>
        <end position="54"/>
    </location>
    <ligand>
        <name>substrate</name>
    </ligand>
</feature>
<feature type="binding site" evidence="1">
    <location>
        <position position="61"/>
    </location>
    <ligand>
        <name>Zn(2+)</name>
        <dbReference type="ChEBI" id="CHEBI:29105"/>
    </ligand>
</feature>
<feature type="binding site" evidence="1">
    <location>
        <position position="65"/>
    </location>
    <ligand>
        <name>substrate</name>
    </ligand>
</feature>
<feature type="binding site" evidence="1">
    <location>
        <position position="65"/>
    </location>
    <ligand>
        <name>Zn(2+)</name>
        <dbReference type="ChEBI" id="CHEBI:29105"/>
    </ligand>
</feature>
<feature type="binding site" evidence="1">
    <location>
        <begin position="93"/>
        <end position="94"/>
    </location>
    <ligand>
        <name>substrate</name>
    </ligand>
</feature>
<feature type="binding site" evidence="1">
    <location>
        <begin position="119"/>
        <end position="121"/>
    </location>
    <ligand>
        <name>substrate</name>
    </ligand>
</feature>
<feature type="binding site" evidence="1">
    <location>
        <position position="124"/>
    </location>
    <ligand>
        <name>substrate</name>
    </ligand>
</feature>
<feature type="binding site" evidence="1">
    <location>
        <position position="172"/>
    </location>
    <ligand>
        <name>substrate</name>
    </ligand>
</feature>
<feature type="binding site" evidence="1">
    <location>
        <position position="172"/>
    </location>
    <ligand>
        <name>Zn(2+)</name>
        <dbReference type="ChEBI" id="CHEBI:29105"/>
    </ligand>
</feature>
<feature type="binding site" evidence="1">
    <location>
        <position position="180"/>
    </location>
    <ligand>
        <name>Zn(2+)</name>
        <dbReference type="ChEBI" id="CHEBI:29105"/>
    </ligand>
</feature>
<organism>
    <name type="scientific">Sodalis glossinidius (strain morsitans)</name>
    <dbReference type="NCBI Taxonomy" id="343509"/>
    <lineage>
        <taxon>Bacteria</taxon>
        <taxon>Pseudomonadati</taxon>
        <taxon>Pseudomonadota</taxon>
        <taxon>Gammaproteobacteria</taxon>
        <taxon>Enterobacterales</taxon>
        <taxon>Bruguierivoracaceae</taxon>
        <taxon>Sodalis</taxon>
    </lineage>
</organism>
<dbReference type="EC" id="5.3.1.28" evidence="1"/>
<dbReference type="EMBL" id="AP008232">
    <property type="protein sequence ID" value="BAE73870.1"/>
    <property type="molecule type" value="Genomic_DNA"/>
</dbReference>
<dbReference type="RefSeq" id="WP_011410348.1">
    <property type="nucleotide sequence ID" value="NC_007712.1"/>
</dbReference>
<dbReference type="SMR" id="Q2NVF5"/>
<dbReference type="STRING" id="343509.SG0595"/>
<dbReference type="KEGG" id="sgl:SG0595"/>
<dbReference type="eggNOG" id="COG0279">
    <property type="taxonomic scope" value="Bacteria"/>
</dbReference>
<dbReference type="HOGENOM" id="CLU_080999_4_0_6"/>
<dbReference type="OrthoDB" id="9810929at2"/>
<dbReference type="BioCyc" id="SGLO343509:SGP1_RS05115-MONOMER"/>
<dbReference type="UniPathway" id="UPA00041">
    <property type="reaction ID" value="UER00436"/>
</dbReference>
<dbReference type="Proteomes" id="UP000001932">
    <property type="component" value="Chromosome"/>
</dbReference>
<dbReference type="GO" id="GO:0005737">
    <property type="term" value="C:cytoplasm"/>
    <property type="evidence" value="ECO:0007669"/>
    <property type="project" value="UniProtKB-SubCell"/>
</dbReference>
<dbReference type="GO" id="GO:0097367">
    <property type="term" value="F:carbohydrate derivative binding"/>
    <property type="evidence" value="ECO:0007669"/>
    <property type="project" value="InterPro"/>
</dbReference>
<dbReference type="GO" id="GO:0008968">
    <property type="term" value="F:D-sedoheptulose 7-phosphate isomerase activity"/>
    <property type="evidence" value="ECO:0007669"/>
    <property type="project" value="UniProtKB-UniRule"/>
</dbReference>
<dbReference type="GO" id="GO:0008270">
    <property type="term" value="F:zinc ion binding"/>
    <property type="evidence" value="ECO:0007669"/>
    <property type="project" value="UniProtKB-UniRule"/>
</dbReference>
<dbReference type="GO" id="GO:0005975">
    <property type="term" value="P:carbohydrate metabolic process"/>
    <property type="evidence" value="ECO:0007669"/>
    <property type="project" value="UniProtKB-UniRule"/>
</dbReference>
<dbReference type="GO" id="GO:2001061">
    <property type="term" value="P:D-glycero-D-manno-heptose 7-phosphate biosynthetic process"/>
    <property type="evidence" value="ECO:0007669"/>
    <property type="project" value="UniProtKB-UniPathway"/>
</dbReference>
<dbReference type="CDD" id="cd05006">
    <property type="entry name" value="SIS_GmhA"/>
    <property type="match status" value="1"/>
</dbReference>
<dbReference type="Gene3D" id="3.40.50.10490">
    <property type="entry name" value="Glucose-6-phosphate isomerase like protein, domain 1"/>
    <property type="match status" value="1"/>
</dbReference>
<dbReference type="HAMAP" id="MF_00067">
    <property type="entry name" value="GmhA"/>
    <property type="match status" value="1"/>
</dbReference>
<dbReference type="InterPro" id="IPR035461">
    <property type="entry name" value="GmhA/DiaA"/>
</dbReference>
<dbReference type="InterPro" id="IPR004515">
    <property type="entry name" value="Phosphoheptose_Isoase"/>
</dbReference>
<dbReference type="InterPro" id="IPR001347">
    <property type="entry name" value="SIS_dom"/>
</dbReference>
<dbReference type="InterPro" id="IPR046348">
    <property type="entry name" value="SIS_dom_sf"/>
</dbReference>
<dbReference type="InterPro" id="IPR050099">
    <property type="entry name" value="SIS_GmhA/DiaA_subfam"/>
</dbReference>
<dbReference type="NCBIfam" id="TIGR00441">
    <property type="entry name" value="gmhA"/>
    <property type="match status" value="1"/>
</dbReference>
<dbReference type="NCBIfam" id="NF001628">
    <property type="entry name" value="PRK00414.1"/>
    <property type="match status" value="1"/>
</dbReference>
<dbReference type="PANTHER" id="PTHR30390:SF7">
    <property type="entry name" value="PHOSPHOHEPTOSE ISOMERASE"/>
    <property type="match status" value="1"/>
</dbReference>
<dbReference type="PANTHER" id="PTHR30390">
    <property type="entry name" value="SEDOHEPTULOSE 7-PHOSPHATE ISOMERASE / DNAA INITIATOR-ASSOCIATING FACTOR FOR REPLICATION INITIATION"/>
    <property type="match status" value="1"/>
</dbReference>
<dbReference type="Pfam" id="PF13580">
    <property type="entry name" value="SIS_2"/>
    <property type="match status" value="1"/>
</dbReference>
<dbReference type="SUPFAM" id="SSF53697">
    <property type="entry name" value="SIS domain"/>
    <property type="match status" value="1"/>
</dbReference>
<dbReference type="PROSITE" id="PS51464">
    <property type="entry name" value="SIS"/>
    <property type="match status" value="1"/>
</dbReference>
<reference key="1">
    <citation type="journal article" date="2006" name="Genome Res.">
        <title>Massive genome erosion and functional adaptations provide insights into the symbiotic lifestyle of Sodalis glossinidius in the tsetse host.</title>
        <authorList>
            <person name="Toh H."/>
            <person name="Weiss B.L."/>
            <person name="Perkin S.A.H."/>
            <person name="Yamashita A."/>
            <person name="Oshima K."/>
            <person name="Hattori M."/>
            <person name="Aksoy S."/>
        </authorList>
    </citation>
    <scope>NUCLEOTIDE SEQUENCE [LARGE SCALE GENOMIC DNA]</scope>
    <source>
        <strain>morsitans</strain>
    </source>
</reference>
<keyword id="KW-0119">Carbohydrate metabolism</keyword>
<keyword id="KW-0963">Cytoplasm</keyword>
<keyword id="KW-0413">Isomerase</keyword>
<keyword id="KW-0479">Metal-binding</keyword>
<keyword id="KW-0862">Zinc</keyword>
<sequence length="194" mass="21129">MYQDLIRNELNKALQTLQNFLSDERHIQSIEDAAKLIADTFKAGGKVLSCGNGGSHCDAMHFAEELTGRYRENRPGYPAIAISDPSHLSCVSNDFGYEQVFSRYVEAVGNKGDVLVGISTSGNSANIIRAIDAARAKGMRVIVLTGKEGGKMAGSADVEIRVPHFGYADRIQEIHIKAIHILILLIEKEMVAQG</sequence>
<gene>
    <name evidence="1" type="primary">gmhA</name>
    <name type="ordered locus">SG0595</name>
</gene>
<name>GMHA_SODGM</name>